<reference key="1">
    <citation type="submission" date="2004-12" db="EMBL/GenBank/DDBJ databases">
        <title>The genome sequence of Borrelia hermsii and Borrelia turicatae: comparative analysis of two agents of endemic N. America relapsing fever.</title>
        <authorList>
            <person name="Porcella S.F."/>
            <person name="Raffel S.J."/>
            <person name="Schrumpf M.E."/>
            <person name="Montgomery B."/>
            <person name="Smith T."/>
            <person name="Schwan T.G."/>
        </authorList>
    </citation>
    <scope>NUCLEOTIDE SEQUENCE [LARGE SCALE GENOMIC DNA]</scope>
    <source>
        <strain>91E135</strain>
    </source>
</reference>
<sequence>MALSKEDILTWLEEAKTSEVVELITAIEEKFGVTAAAVAVAAGSGPASVDAEEQTEFDVMLMSFGDSKINVIKEVRAVTGLGLGEAKALVEAAPKAIKEGVSKADAEDIKKKLEAVGAKVEIK</sequence>
<organism>
    <name type="scientific">Borrelia turicatae (strain 91E135)</name>
    <dbReference type="NCBI Taxonomy" id="314724"/>
    <lineage>
        <taxon>Bacteria</taxon>
        <taxon>Pseudomonadati</taxon>
        <taxon>Spirochaetota</taxon>
        <taxon>Spirochaetia</taxon>
        <taxon>Spirochaetales</taxon>
        <taxon>Borreliaceae</taxon>
        <taxon>Borrelia</taxon>
    </lineage>
</organism>
<keyword id="KW-1185">Reference proteome</keyword>
<keyword id="KW-0687">Ribonucleoprotein</keyword>
<keyword id="KW-0689">Ribosomal protein</keyword>
<evidence type="ECO:0000255" key="1">
    <source>
        <dbReference type="HAMAP-Rule" id="MF_00368"/>
    </source>
</evidence>
<evidence type="ECO:0000305" key="2"/>
<proteinExistence type="inferred from homology"/>
<comment type="function">
    <text evidence="1">Forms part of the ribosomal stalk which helps the ribosome interact with GTP-bound translation factors. Is thus essential for accurate translation.</text>
</comment>
<comment type="subunit">
    <text evidence="1">Homodimer. Part of the ribosomal stalk of the 50S ribosomal subunit. Forms a multimeric L10(L12)X complex, where L10 forms an elongated spine to which 2 to 4 L12 dimers bind in a sequential fashion. Binds GTP-bound translation factors.</text>
</comment>
<comment type="similarity">
    <text evidence="1">Belongs to the bacterial ribosomal protein bL12 family.</text>
</comment>
<dbReference type="EMBL" id="CP000049">
    <property type="protein sequence ID" value="AAX17720.1"/>
    <property type="molecule type" value="Genomic_DNA"/>
</dbReference>
<dbReference type="RefSeq" id="WP_011772339.1">
    <property type="nucleotide sequence ID" value="NC_008710.1"/>
</dbReference>
<dbReference type="SMR" id="A1QZH8"/>
<dbReference type="KEGG" id="btu:BT0390"/>
<dbReference type="eggNOG" id="COG0222">
    <property type="taxonomic scope" value="Bacteria"/>
</dbReference>
<dbReference type="HOGENOM" id="CLU_086499_3_2_12"/>
<dbReference type="Proteomes" id="UP000001205">
    <property type="component" value="Chromosome"/>
</dbReference>
<dbReference type="GO" id="GO:0022625">
    <property type="term" value="C:cytosolic large ribosomal subunit"/>
    <property type="evidence" value="ECO:0007669"/>
    <property type="project" value="TreeGrafter"/>
</dbReference>
<dbReference type="GO" id="GO:0003729">
    <property type="term" value="F:mRNA binding"/>
    <property type="evidence" value="ECO:0007669"/>
    <property type="project" value="TreeGrafter"/>
</dbReference>
<dbReference type="GO" id="GO:0003735">
    <property type="term" value="F:structural constituent of ribosome"/>
    <property type="evidence" value="ECO:0007669"/>
    <property type="project" value="InterPro"/>
</dbReference>
<dbReference type="GO" id="GO:0006412">
    <property type="term" value="P:translation"/>
    <property type="evidence" value="ECO:0007669"/>
    <property type="project" value="UniProtKB-UniRule"/>
</dbReference>
<dbReference type="CDD" id="cd00387">
    <property type="entry name" value="Ribosomal_L7_L12"/>
    <property type="match status" value="1"/>
</dbReference>
<dbReference type="FunFam" id="3.30.1390.10:FF:000001">
    <property type="entry name" value="50S ribosomal protein L7/L12"/>
    <property type="match status" value="1"/>
</dbReference>
<dbReference type="Gene3D" id="3.30.1390.10">
    <property type="match status" value="1"/>
</dbReference>
<dbReference type="Gene3D" id="1.20.5.710">
    <property type="entry name" value="Single helix bin"/>
    <property type="match status" value="1"/>
</dbReference>
<dbReference type="HAMAP" id="MF_00368">
    <property type="entry name" value="Ribosomal_bL12"/>
    <property type="match status" value="1"/>
</dbReference>
<dbReference type="InterPro" id="IPR000206">
    <property type="entry name" value="Ribosomal_bL12"/>
</dbReference>
<dbReference type="InterPro" id="IPR013823">
    <property type="entry name" value="Ribosomal_bL12_C"/>
</dbReference>
<dbReference type="InterPro" id="IPR014719">
    <property type="entry name" value="Ribosomal_bL12_C/ClpS-like"/>
</dbReference>
<dbReference type="InterPro" id="IPR008932">
    <property type="entry name" value="Ribosomal_bL12_oligo"/>
</dbReference>
<dbReference type="InterPro" id="IPR036235">
    <property type="entry name" value="Ribosomal_bL12_oligo_N_sf"/>
</dbReference>
<dbReference type="NCBIfam" id="TIGR00855">
    <property type="entry name" value="L12"/>
    <property type="match status" value="1"/>
</dbReference>
<dbReference type="PANTHER" id="PTHR45987">
    <property type="entry name" value="39S RIBOSOMAL PROTEIN L12"/>
    <property type="match status" value="1"/>
</dbReference>
<dbReference type="PANTHER" id="PTHR45987:SF4">
    <property type="entry name" value="LARGE RIBOSOMAL SUBUNIT PROTEIN BL12M"/>
    <property type="match status" value="1"/>
</dbReference>
<dbReference type="Pfam" id="PF00542">
    <property type="entry name" value="Ribosomal_L12"/>
    <property type="match status" value="1"/>
</dbReference>
<dbReference type="Pfam" id="PF16320">
    <property type="entry name" value="Ribosomal_L12_N"/>
    <property type="match status" value="1"/>
</dbReference>
<dbReference type="SUPFAM" id="SSF54736">
    <property type="entry name" value="ClpS-like"/>
    <property type="match status" value="1"/>
</dbReference>
<dbReference type="SUPFAM" id="SSF48300">
    <property type="entry name" value="Ribosomal protein L7/12, oligomerisation (N-terminal) domain"/>
    <property type="match status" value="1"/>
</dbReference>
<gene>
    <name evidence="1" type="primary">rplL</name>
    <name type="ordered locus">BT0390</name>
</gene>
<name>RL7_BORT9</name>
<protein>
    <recommendedName>
        <fullName evidence="1">Large ribosomal subunit protein bL12</fullName>
    </recommendedName>
    <alternativeName>
        <fullName evidence="2">50S ribosomal protein L7/L12</fullName>
    </alternativeName>
</protein>
<feature type="chain" id="PRO_1000195773" description="Large ribosomal subunit protein bL12">
    <location>
        <begin position="1"/>
        <end position="123"/>
    </location>
</feature>
<accession>A1QZH8</accession>